<evidence type="ECO:0000250" key="1"/>
<evidence type="ECO:0000250" key="2">
    <source>
        <dbReference type="UniProtKB" id="P06748"/>
    </source>
</evidence>
<evidence type="ECO:0000255" key="3"/>
<evidence type="ECO:0000256" key="4">
    <source>
        <dbReference type="SAM" id="MobiDB-lite"/>
    </source>
</evidence>
<evidence type="ECO:0000269" key="5">
    <source>
    </source>
</evidence>
<evidence type="ECO:0000269" key="6">
    <source>
    </source>
</evidence>
<evidence type="ECO:0000269" key="7">
    <source>
    </source>
</evidence>
<evidence type="ECO:0000305" key="8"/>
<evidence type="ECO:0007744" key="9">
    <source>
    </source>
</evidence>
<evidence type="ECO:0007744" key="10">
    <source>
    </source>
</evidence>
<evidence type="ECO:0007744" key="11">
    <source>
    </source>
</evidence>
<evidence type="ECO:0007744" key="12">
    <source>
    </source>
</evidence>
<evidence type="ECO:0007744" key="13">
    <source>
    </source>
</evidence>
<evidence type="ECO:0007744" key="14">
    <source>
    </source>
</evidence>
<evidence type="ECO:0007744" key="15">
    <source>
    </source>
</evidence>
<evidence type="ECO:0007829" key="16">
    <source>
        <dbReference type="PDB" id="4N8M"/>
    </source>
</evidence>
<name>NPM_MOUSE</name>
<feature type="chain" id="PRO_0000219482" description="Nucleophosmin">
    <location>
        <begin position="1"/>
        <end position="292"/>
    </location>
</feature>
<feature type="region of interest" description="Required for interaction with SENP3" evidence="1">
    <location>
        <begin position="1"/>
        <end position="185"/>
    </location>
</feature>
<feature type="region of interest" description="Necessary for interaction with APEX1" evidence="1">
    <location>
        <begin position="1"/>
        <end position="117"/>
    </location>
</feature>
<feature type="region of interest" description="Disordered" evidence="4">
    <location>
        <begin position="138"/>
        <end position="248"/>
    </location>
</feature>
<feature type="region of interest" description="Interaction with NOP2" evidence="2">
    <location>
        <begin position="186"/>
        <end position="214"/>
    </location>
</feature>
<feature type="region of interest" description="Required for nucleolar localization" evidence="1">
    <location>
        <begin position="241"/>
        <end position="292"/>
    </location>
</feature>
<feature type="short sequence motif" description="Nuclear localization signal" evidence="3">
    <location>
        <begin position="152"/>
        <end position="157"/>
    </location>
</feature>
<feature type="short sequence motif" description="Nuclear localization signal" evidence="3">
    <location>
        <begin position="190"/>
        <end position="196"/>
    </location>
</feature>
<feature type="compositionally biased region" description="Acidic residues" evidence="4">
    <location>
        <begin position="159"/>
        <end position="186"/>
    </location>
</feature>
<feature type="compositionally biased region" description="Basic and acidic residues" evidence="4">
    <location>
        <begin position="187"/>
        <end position="199"/>
    </location>
</feature>
<feature type="compositionally biased region" description="Polar residues" evidence="4">
    <location>
        <begin position="201"/>
        <end position="210"/>
    </location>
</feature>
<feature type="compositionally biased region" description="Basic and acidic residues" evidence="4">
    <location>
        <begin position="221"/>
        <end position="233"/>
    </location>
</feature>
<feature type="site" description="Interaction between pentamers" evidence="1">
    <location>
        <position position="55"/>
    </location>
</feature>
<feature type="site" description="Interaction between pentamers" evidence="1">
    <location>
        <position position="80"/>
    </location>
</feature>
<feature type="modified residue" description="N-acetylmethionine" evidence="2">
    <location>
        <position position="1"/>
    </location>
</feature>
<feature type="modified residue" description="Phosphoserine; by PLK1 and PLK2" evidence="2">
    <location>
        <position position="4"/>
    </location>
</feature>
<feature type="modified residue" description="Phosphoserine" evidence="2">
    <location>
        <position position="10"/>
    </location>
</feature>
<feature type="modified residue" description="N6-acetyllysine; alternate" evidence="2">
    <location>
        <position position="32"/>
    </location>
</feature>
<feature type="modified residue" description="Phosphoserine" evidence="2">
    <location>
        <position position="43"/>
    </location>
</feature>
<feature type="modified residue" description="Phosphotyrosine" evidence="14">
    <location>
        <position position="67"/>
    </location>
</feature>
<feature type="modified residue" description="Phosphoserine" evidence="13 14">
    <location>
        <position position="70"/>
    </location>
</feature>
<feature type="modified residue" description="Phosphothreonine" evidence="14">
    <location>
        <position position="75"/>
    </location>
</feature>
<feature type="modified residue" description="Phosphothreonine" evidence="2">
    <location>
        <position position="95"/>
    </location>
</feature>
<feature type="modified residue" description="Phosphoserine" evidence="9 10 11 12 13 14">
    <location>
        <position position="125"/>
    </location>
</feature>
<feature type="modified residue" description="Phosphoserine" evidence="2">
    <location>
        <position position="139"/>
    </location>
</feature>
<feature type="modified residue" description="N6-acetyllysine; alternate" evidence="2">
    <location>
        <position position="150"/>
    </location>
</feature>
<feature type="modified residue" description="N6-acetyllysine" evidence="2">
    <location>
        <position position="154"/>
    </location>
</feature>
<feature type="modified residue" description="Phosphothreonine; by CDK1 and CDK2" evidence="2">
    <location>
        <position position="198"/>
    </location>
</feature>
<feature type="modified residue" description="ADP-ribosylserine" evidence="2">
    <location>
        <position position="206"/>
    </location>
</feature>
<feature type="modified residue" description="N6-acetyllysine" evidence="2">
    <location>
        <position position="211"/>
    </location>
</feature>
<feature type="modified residue" description="Phosphothreonine; by CDK1" evidence="1">
    <location>
        <position position="217"/>
    </location>
</feature>
<feature type="modified residue" description="Phosphoserine" evidence="2">
    <location>
        <position position="225"/>
    </location>
</feature>
<feature type="modified residue" description="N6-acetyllysine" evidence="2">
    <location>
        <position position="227"/>
    </location>
</feature>
<feature type="modified residue" description="N6-acetyllysine; alternate" evidence="2">
    <location>
        <position position="228"/>
    </location>
</feature>
<feature type="modified residue" description="Phosphothreonine; by CDK1" evidence="2">
    <location>
        <position position="232"/>
    </location>
</feature>
<feature type="modified residue" description="Phosphothreonine; by CDK1" evidence="2">
    <location>
        <position position="235"/>
    </location>
</feature>
<feature type="modified residue" description="Phosphoserine" evidence="2">
    <location>
        <position position="240"/>
    </location>
</feature>
<feature type="modified residue" description="Phosphoserine" evidence="2">
    <location>
        <position position="241"/>
    </location>
</feature>
<feature type="modified residue" description="N6-acetyllysine; alternate" evidence="2">
    <location>
        <position position="248"/>
    </location>
</feature>
<feature type="modified residue" description="Phosphoserine" evidence="2">
    <location>
        <position position="252"/>
    </location>
</feature>
<feature type="modified residue" description="N6-acetyllysine; alternate" evidence="15">
    <location>
        <position position="255"/>
    </location>
</feature>
<feature type="modified residue" description="Phosphoserine" evidence="2">
    <location>
        <position position="258"/>
    </location>
</feature>
<feature type="modified residue" description="N6-acetyllysine; alternate" evidence="15">
    <location>
        <position position="265"/>
    </location>
</feature>
<feature type="modified residue" description="N6-succinyllysine; alternate" evidence="15">
    <location>
        <position position="265"/>
    </location>
</feature>
<feature type="modified residue" description="N6-acetyllysine; alternate" evidence="15">
    <location>
        <position position="271"/>
    </location>
</feature>
<feature type="modified residue" description="Phosphothreonine" evidence="2">
    <location>
        <position position="277"/>
    </location>
</feature>
<feature type="modified residue" description="N6-acetyllysine" evidence="2">
    <location>
        <position position="290"/>
    </location>
</feature>
<feature type="cross-link" description="Glycyl lysine isopeptide (Lys-Gly) (interchain with G-Cter in SUMO2)" evidence="2">
    <location>
        <position position="27"/>
    </location>
</feature>
<feature type="cross-link" description="Glycyl lysine isopeptide (Lys-Gly) (interchain with G-Cter in SUMO1); alternate" evidence="2">
    <location>
        <position position="32"/>
    </location>
</feature>
<feature type="cross-link" description="Glycyl lysine isopeptide (Lys-Gly) (interchain with G-Cter in SUMO2); alternate" evidence="2">
    <location>
        <position position="32"/>
    </location>
</feature>
<feature type="cross-link" description="Glycyl lysine isopeptide (Lys-Gly) (interchain with G-Cter in SUMO2)" evidence="2">
    <location>
        <position position="141"/>
    </location>
</feature>
<feature type="cross-link" description="Glycyl lysine isopeptide (Lys-Gly) (interchain with G-Cter in SUMO2); alternate" evidence="2">
    <location>
        <position position="150"/>
    </location>
</feature>
<feature type="cross-link" description="Glycyl lysine isopeptide (Lys-Gly) (interchain with G-Cter in SUMO2)" evidence="2">
    <location>
        <position position="214"/>
    </location>
</feature>
<feature type="cross-link" description="Glycyl lysine isopeptide (Lys-Gly) (interchain with G-Cter in SUMO); alternate" evidence="1">
    <location>
        <position position="228"/>
    </location>
</feature>
<feature type="cross-link" description="Glycyl lysine isopeptide (Lys-Gly) (interchain with G-Cter in SUMO1); alternate" evidence="2">
    <location>
        <position position="246"/>
    </location>
</feature>
<feature type="cross-link" description="Glycyl lysine isopeptide (Lys-Gly) (interchain with G-Cter in SUMO2); alternate" evidence="2">
    <location>
        <position position="246"/>
    </location>
</feature>
<feature type="cross-link" description="Glycyl lysine isopeptide (Lys-Gly) (interchain with G-Cter in SUMO2); alternate" evidence="2">
    <location>
        <position position="248"/>
    </location>
</feature>
<feature type="cross-link" description="Glycyl lysine isopeptide (Lys-Gly) (interchain with G-Cter in SUMO1); alternate" evidence="2">
    <location>
        <position position="255"/>
    </location>
</feature>
<feature type="cross-link" description="Glycyl lysine isopeptide (Lys-Gly) (interchain with G-Cter in SUMO2); alternate" evidence="2">
    <location>
        <position position="255"/>
    </location>
</feature>
<feature type="cross-link" description="Glycyl lysine isopeptide (Lys-Gly) (interchain with G-Cter in SUMO); alternate" evidence="1">
    <location>
        <position position="261"/>
    </location>
</feature>
<feature type="cross-link" description="Glycyl lysine isopeptide (Lys-Gly) (interchain with G-Cter in SUMO2); alternate" evidence="2">
    <location>
        <position position="261"/>
    </location>
</feature>
<feature type="cross-link" description="Glycyl lysine isopeptide (Lys-Gly) (interchain with G-Cter in SUMO1); alternate" evidence="2">
    <location>
        <position position="265"/>
    </location>
</feature>
<feature type="cross-link" description="Glycyl lysine isopeptide (Lys-Gly) (interchain with G-Cter in SUMO2); alternate" evidence="2">
    <location>
        <position position="265"/>
    </location>
</feature>
<feature type="cross-link" description="Glycyl lysine isopeptide (Lys-Gly) (interchain with G-Cter in SUMO2); alternate" evidence="2">
    <location>
        <position position="271"/>
    </location>
</feature>
<feature type="strand" evidence="16">
    <location>
        <begin position="15"/>
        <end position="24"/>
    </location>
</feature>
<feature type="strand" evidence="16">
    <location>
        <begin position="29"/>
        <end position="31"/>
    </location>
</feature>
<feature type="helix" evidence="16">
    <location>
        <begin position="37"/>
        <end position="39"/>
    </location>
</feature>
<feature type="strand" evidence="16">
    <location>
        <begin position="40"/>
        <end position="49"/>
    </location>
</feature>
<feature type="strand" evidence="16">
    <location>
        <begin position="58"/>
        <end position="65"/>
    </location>
</feature>
<feature type="strand" evidence="16">
    <location>
        <begin position="69"/>
        <end position="80"/>
    </location>
</feature>
<feature type="turn" evidence="16">
    <location>
        <begin position="81"/>
        <end position="83"/>
    </location>
</feature>
<feature type="strand" evidence="16">
    <location>
        <begin position="84"/>
        <end position="94"/>
    </location>
</feature>
<feature type="strand" evidence="16">
    <location>
        <begin position="96"/>
        <end position="104"/>
    </location>
</feature>
<feature type="strand" evidence="16">
    <location>
        <begin position="109"/>
        <end position="117"/>
    </location>
</feature>
<sequence>MEDSMDMDMSPLRPQNYLFGCELKADKDYHFKVDNDENEHQLSLRTVSLGAGAKDELHIVEAEAMNYEGSPIKVTLATLKMSVQPTVSLGGFEITPPVVLRLKCGSGPVHISGQHLVAVEEDAESEDEDEEDVKLLGMSGKRSAPGGGNKVPQKKVKLDEDDEDDDEDDEDDEDDDDDDFDEEETEEKVPVKKSVRDTPAKNAQKSNQNGKDLKPSTPRSKGQESFKKQEKTPKTPKGPSSVEDIKAKMQASIEKGGSLPKVEAKFINYVKNCFRMTDQEAIQDLWQWRKSL</sequence>
<protein>
    <recommendedName>
        <fullName>Nucleophosmin</fullName>
        <shortName>NPM</shortName>
    </recommendedName>
    <alternativeName>
        <fullName>Nucleolar phosphoprotein B23</fullName>
    </alternativeName>
    <alternativeName>
        <fullName>Nucleolar protein NO38</fullName>
    </alternativeName>
    <alternativeName>
        <fullName>Numatrin</fullName>
    </alternativeName>
</protein>
<organism>
    <name type="scientific">Mus musculus</name>
    <name type="common">Mouse</name>
    <dbReference type="NCBI Taxonomy" id="10090"/>
    <lineage>
        <taxon>Eukaryota</taxon>
        <taxon>Metazoa</taxon>
        <taxon>Chordata</taxon>
        <taxon>Craniata</taxon>
        <taxon>Vertebrata</taxon>
        <taxon>Euteleostomi</taxon>
        <taxon>Mammalia</taxon>
        <taxon>Eutheria</taxon>
        <taxon>Euarchontoglires</taxon>
        <taxon>Glires</taxon>
        <taxon>Rodentia</taxon>
        <taxon>Myomorpha</taxon>
        <taxon>Muroidea</taxon>
        <taxon>Muridae</taxon>
        <taxon>Murinae</taxon>
        <taxon>Mus</taxon>
        <taxon>Mus</taxon>
    </lineage>
</organism>
<keyword id="KW-0002">3D-structure</keyword>
<keyword id="KW-0007">Acetylation</keyword>
<keyword id="KW-0013">ADP-ribosylation</keyword>
<keyword id="KW-0143">Chaperone</keyword>
<keyword id="KW-0963">Cytoplasm</keyword>
<keyword id="KW-0206">Cytoskeleton</keyword>
<keyword id="KW-0903">Direct protein sequencing</keyword>
<keyword id="KW-1015">Disulfide bond</keyword>
<keyword id="KW-0238">DNA-binding</keyword>
<keyword id="KW-1017">Isopeptide bond</keyword>
<keyword id="KW-0539">Nucleus</keyword>
<keyword id="KW-0597">Phosphoprotein</keyword>
<keyword id="KW-1185">Reference proteome</keyword>
<keyword id="KW-0694">RNA-binding</keyword>
<keyword id="KW-0832">Ubl conjugation</keyword>
<comment type="function">
    <text evidence="2">Involved in diverse cellular processes such as ribosome biogenesis, centrosome duplication, protein chaperoning, histone assembly, cell proliferation, and regulation of tumor suppressors p53/TP53 and ARF. Binds ribosome presumably to drive ribosome nuclear export. Associated with nucleolar ribonucleoprotein structures and bind single-stranded nucleic acids. Acts as a chaperonin for the core histones H3, H2B and H4. Stimulates APEX1 endonuclease activity on apurinic/apyrimidinic (AP) double-stranded DNA but inhibits APEX1 endonuclease activity on AP single-stranded RNA. May exert a control of APEX1 endonuclease activity within nucleoli devoted to repair AP on rDNA and the removal of oxidized rRNA molecules. In concert with BRCA2, regulates centrosome duplication. Regulates centriole duplication: phosphorylation by PLK2 is able to trigger centriole replication. Negatively regulates the activation of EIF2AK2/PKR and suppresses apoptosis through inhibition of EIF2AK2/PKR autophosphorylation. Antagonizes the inhibitory effect of ATF5 on cell proliferation and relieves ATF5-induced G2/M blockade. In complex with MYC enhances the transcription of MYC target genes. May act as chaperonin or cotransporter in the nucleolar localization of transcription termination factor TTF1 (PubMed:20513429).</text>
</comment>
<comment type="subunit">
    <text evidence="2 5 6 7">Decamer formed by two pentameric rings associated in a head-to-head fashion. Disulfide-linked dimers under certain conditions. Interacts with NSUN2 and SENP3 (By similarity). The SWAP complex consists of NPM1, NCL, PARP1 and SWAP70. Interacts with the methylated form of RPS10. Interacts (via N-terminal domain) with APEX1; the interaction is RNA-dependent and decreases peroxide-damaged cells. Interacts with NEK2. Interacts with ROCK2 and BRCA2 (By similarity). Interacts with RPGR. Interacts with CENPW (By similarity). Interacts with EIF2AK2/PKR. Interacts with DDX31; this interaction prevents interaction between NPM1 and HDM2 (By similarity). Interacts with MYC; competitive with NOP53. Interacts with NOP53; the interaction is direct and competitive with MYC (By similarity). Interacts with LRRC34 (PubMed:24991885). Interacts with RRP1B (By similarity). Interacts with NPM3 (By similarity). Interacts with ALKBH2. Interacts with TTF1 (via C-terminal region) (PubMed:20513429). Interacts with NOP2 (By similarity). Interacts with ARID3C (via REKLES DOMAIN); the interaction mediates ARID3C nuclear shuttling (By similarity).</text>
</comment>
<comment type="interaction">
    <interactant intactId="EBI-626362">
        <id>Q61937</id>
    </interactant>
    <interactant intactId="EBI-389668">
        <id>Q00987</id>
        <label>MDM2</label>
    </interactant>
    <organismsDiffer>true</organismsDiffer>
    <experiments>2</experiments>
</comment>
<comment type="subcellular location">
    <subcellularLocation>
        <location evidence="2">Nucleus</location>
        <location evidence="2">Nucleolus</location>
    </subcellularLocation>
    <subcellularLocation>
        <location evidence="2">Nucleus</location>
        <location evidence="2">Nucleoplasm</location>
    </subcellularLocation>
    <subcellularLocation>
        <location evidence="2">Cytoplasm</location>
        <location evidence="2">Cytoskeleton</location>
        <location evidence="2">Microtubule organizing center</location>
        <location evidence="2">Centrosome</location>
    </subcellularLocation>
    <text evidence="2">Generally nucleolar, but is translocated to the nucleoplasm in case of serum starvation or treatment with anticancer drugs. Has been found in the cytoplasm in patients with primary acute myelogenous leukemia (AML), but not with secondary AML. Co-localizes with the methylated form of RPS10 in the granular component (GC) region of the nucleolus. Colocalized with nucleolin and APEX1 in nucleoli. Isoform 1 of NEK2 is required for its localization to the centrosome during mitosis. Can shuttle between cytoplasm and nucleus.</text>
</comment>
<comment type="tissue specificity">
    <text evidence="7">Expressed in B-cells that have been induced to switch to various Ig isotypes.</text>
</comment>
<comment type="PTM">
    <text evidence="2">Acetylated at C-terminal lysine residues, thereby increasing affinity to histones.</text>
</comment>
<comment type="PTM">
    <text evidence="2">ADP-ribosylated.</text>
</comment>
<comment type="PTM">
    <text evidence="2">Phosphorylated at Ser-4 by PLK1 and PLK2. Phosphorylation at Ser-4 by PLK2 in S phase is required for centriole duplication and is sufficient to trigger centriole replication. Phosphorylation at Ser-4 by PLK1 takes place during mitosis. Phosphorylated by CDK2 at Ser-125 and Thr-198. Phosphorylation at Thr-198 may trigger initiation of centrosome duplication. Phosphorylated by CDK1 at Thr-198, Thr-217, Thr-232 and Thr-235 during cell mitosis. When these four sites are phosphorated, RNA-binding activity seem to be abolished. May be phosphorylated at Ser-70 by NEK2. The Thr-198 phosphorylated form has higher affinity for ROCK2 (By similarity).</text>
</comment>
<comment type="PTM">
    <text evidence="2">Sumoylated by ARF.</text>
</comment>
<comment type="PTM">
    <text evidence="2">Ubiquitinated. Ubiquitination leads to proteasomal degradation. Deubiquitinated by USP36.</text>
</comment>
<comment type="similarity">
    <text evidence="8">Belongs to the nucleoplasmin family.</text>
</comment>
<dbReference type="EMBL" id="M33212">
    <property type="protein sequence ID" value="AAA39801.1"/>
    <property type="molecule type" value="mRNA"/>
</dbReference>
<dbReference type="EMBL" id="AK028253">
    <property type="protein sequence ID" value="BAC25844.1"/>
    <property type="molecule type" value="mRNA"/>
</dbReference>
<dbReference type="EMBL" id="BC054755">
    <property type="protein sequence ID" value="AAH54755.1"/>
    <property type="molecule type" value="mRNA"/>
</dbReference>
<dbReference type="CCDS" id="CCDS24532.1"/>
<dbReference type="PIR" id="I52858">
    <property type="entry name" value="I52858"/>
</dbReference>
<dbReference type="RefSeq" id="NP_032748.1">
    <property type="nucleotide sequence ID" value="NM_008722.3"/>
</dbReference>
<dbReference type="PDB" id="4N8M">
    <property type="method" value="X-ray"/>
    <property type="resolution" value="1.80 A"/>
    <property type="chains" value="A/B/C/D/E=1-130"/>
</dbReference>
<dbReference type="PDBsum" id="4N8M"/>
<dbReference type="BMRB" id="Q61937"/>
<dbReference type="SMR" id="Q61937"/>
<dbReference type="BioGRID" id="201823">
    <property type="interactions" value="109"/>
</dbReference>
<dbReference type="CORUM" id="Q61937"/>
<dbReference type="FunCoup" id="Q61937">
    <property type="interactions" value="2709"/>
</dbReference>
<dbReference type="IntAct" id="Q61937">
    <property type="interactions" value="11"/>
</dbReference>
<dbReference type="MINT" id="Q61937"/>
<dbReference type="STRING" id="10090.ENSMUSP00000075067"/>
<dbReference type="ChEMBL" id="CHEMBL5386"/>
<dbReference type="GlyGen" id="Q61937">
    <property type="glycosylation" value="5 sites, 1 O-linked glycan (4 sites)"/>
</dbReference>
<dbReference type="iPTMnet" id="Q61937"/>
<dbReference type="PhosphoSitePlus" id="Q61937"/>
<dbReference type="SwissPalm" id="Q61937"/>
<dbReference type="jPOST" id="Q61937"/>
<dbReference type="PaxDb" id="10090-ENSMUSP00000075067"/>
<dbReference type="ProteomicsDB" id="295514"/>
<dbReference type="Pumba" id="Q61937"/>
<dbReference type="DNASU" id="18148"/>
<dbReference type="Ensembl" id="ENSMUST00000075641.10">
    <property type="protein sequence ID" value="ENSMUSP00000075067.4"/>
    <property type="gene ID" value="ENSMUSG00000057113.14"/>
</dbReference>
<dbReference type="GeneID" id="18148"/>
<dbReference type="KEGG" id="mmu:18148"/>
<dbReference type="UCSC" id="uc007ikd.2">
    <property type="organism name" value="mouse"/>
</dbReference>
<dbReference type="AGR" id="MGI:106184"/>
<dbReference type="CTD" id="4869"/>
<dbReference type="MGI" id="MGI:106184">
    <property type="gene designation" value="Npm1"/>
</dbReference>
<dbReference type="VEuPathDB" id="HostDB:ENSMUSG00000057113"/>
<dbReference type="eggNOG" id="KOG0488">
    <property type="taxonomic scope" value="Eukaryota"/>
</dbReference>
<dbReference type="GeneTree" id="ENSGT00940000153052"/>
<dbReference type="InParanoid" id="Q61937"/>
<dbReference type="OMA" id="XAVEEDA"/>
<dbReference type="OrthoDB" id="9946910at2759"/>
<dbReference type="PhylomeDB" id="Q61937"/>
<dbReference type="TreeFam" id="TF327704"/>
<dbReference type="Reactome" id="R-MMU-3899300">
    <property type="pathway name" value="SUMOylation of transcription cofactors"/>
</dbReference>
<dbReference type="Reactome" id="R-MMU-606279">
    <property type="pathway name" value="Deposition of new CENPA-containing nucleosomes at the centromere"/>
</dbReference>
<dbReference type="Reactome" id="R-MMU-6804115">
    <property type="pathway name" value="TP53 regulates transcription of additional cell cycle genes whose exact role in the p53 pathway remain uncertain"/>
</dbReference>
<dbReference type="Reactome" id="R-MMU-8869496">
    <property type="pathway name" value="TFAP2A acts as a transcriptional repressor during retinoic acid induced cell differentiation"/>
</dbReference>
<dbReference type="Reactome" id="R-MMU-9833482">
    <property type="pathway name" value="PKR-mediated signaling"/>
</dbReference>
<dbReference type="BioGRID-ORCS" id="18148">
    <property type="hits" value="27 hits in 117 CRISPR screens"/>
</dbReference>
<dbReference type="CD-CODE" id="CE726F99">
    <property type="entry name" value="Postsynaptic density"/>
</dbReference>
<dbReference type="ChiTaRS" id="Npm1">
    <property type="organism name" value="mouse"/>
</dbReference>
<dbReference type="EvolutionaryTrace" id="Q61937"/>
<dbReference type="PRO" id="PR:Q61937"/>
<dbReference type="Proteomes" id="UP000000589">
    <property type="component" value="Chromosome 11"/>
</dbReference>
<dbReference type="RNAct" id="Q61937">
    <property type="molecule type" value="protein"/>
</dbReference>
<dbReference type="Bgee" id="ENSMUSG00000057113">
    <property type="expression patterns" value="Expressed in embryonic post-anal tail and 68 other cell types or tissues"/>
</dbReference>
<dbReference type="ExpressionAtlas" id="Q61937">
    <property type="expression patterns" value="baseline and differential"/>
</dbReference>
<dbReference type="GO" id="GO:0005813">
    <property type="term" value="C:centrosome"/>
    <property type="evidence" value="ECO:0000314"/>
    <property type="project" value="MGI"/>
</dbReference>
<dbReference type="GO" id="GO:0005737">
    <property type="term" value="C:cytoplasm"/>
    <property type="evidence" value="ECO:0000314"/>
    <property type="project" value="MGI"/>
</dbReference>
<dbReference type="GO" id="GO:0005829">
    <property type="term" value="C:cytosol"/>
    <property type="evidence" value="ECO:0000314"/>
    <property type="project" value="MGI"/>
</dbReference>
<dbReference type="GO" id="GO:0001652">
    <property type="term" value="C:granular component"/>
    <property type="evidence" value="ECO:0000314"/>
    <property type="project" value="MGI"/>
</dbReference>
<dbReference type="GO" id="GO:0015934">
    <property type="term" value="C:large ribosomal subunit"/>
    <property type="evidence" value="ECO:0000314"/>
    <property type="project" value="MGI"/>
</dbReference>
<dbReference type="GO" id="GO:0016607">
    <property type="term" value="C:nuclear speck"/>
    <property type="evidence" value="ECO:0000314"/>
    <property type="project" value="MGI"/>
</dbReference>
<dbReference type="GO" id="GO:0005730">
    <property type="term" value="C:nucleolus"/>
    <property type="evidence" value="ECO:0000314"/>
    <property type="project" value="MGI"/>
</dbReference>
<dbReference type="GO" id="GO:0005654">
    <property type="term" value="C:nucleoplasm"/>
    <property type="evidence" value="ECO:0000314"/>
    <property type="project" value="MGI"/>
</dbReference>
<dbReference type="GO" id="GO:0005634">
    <property type="term" value="C:nucleus"/>
    <property type="evidence" value="ECO:0000314"/>
    <property type="project" value="MGI"/>
</dbReference>
<dbReference type="GO" id="GO:0032993">
    <property type="term" value="C:protein-DNA complex"/>
    <property type="evidence" value="ECO:0007669"/>
    <property type="project" value="Ensembl"/>
</dbReference>
<dbReference type="GO" id="GO:1990904">
    <property type="term" value="C:ribonucleoprotein complex"/>
    <property type="evidence" value="ECO:0000266"/>
    <property type="project" value="MGI"/>
</dbReference>
<dbReference type="GO" id="GO:0015935">
    <property type="term" value="C:small ribosomal subunit"/>
    <property type="evidence" value="ECO:0000314"/>
    <property type="project" value="MGI"/>
</dbReference>
<dbReference type="GO" id="GO:0031616">
    <property type="term" value="C:spindle pole centrosome"/>
    <property type="evidence" value="ECO:0007669"/>
    <property type="project" value="Ensembl"/>
</dbReference>
<dbReference type="GO" id="GO:0001046">
    <property type="term" value="F:core promoter sequence-specific DNA binding"/>
    <property type="evidence" value="ECO:0007669"/>
    <property type="project" value="Ensembl"/>
</dbReference>
<dbReference type="GO" id="GO:0042393">
    <property type="term" value="F:histone binding"/>
    <property type="evidence" value="ECO:0007669"/>
    <property type="project" value="Ensembl"/>
</dbReference>
<dbReference type="GO" id="GO:0042802">
    <property type="term" value="F:identical protein binding"/>
    <property type="evidence" value="ECO:0000353"/>
    <property type="project" value="MGI"/>
</dbReference>
<dbReference type="GO" id="GO:0051059">
    <property type="term" value="F:NF-kappaB binding"/>
    <property type="evidence" value="ECO:0000250"/>
    <property type="project" value="UniProtKB"/>
</dbReference>
<dbReference type="GO" id="GO:0042803">
    <property type="term" value="F:protein homodimerization activity"/>
    <property type="evidence" value="ECO:0007669"/>
    <property type="project" value="Ensembl"/>
</dbReference>
<dbReference type="GO" id="GO:0019901">
    <property type="term" value="F:protein kinase binding"/>
    <property type="evidence" value="ECO:0007669"/>
    <property type="project" value="Ensembl"/>
</dbReference>
<dbReference type="GO" id="GO:0004860">
    <property type="term" value="F:protein kinase inhibitor activity"/>
    <property type="evidence" value="ECO:0000250"/>
    <property type="project" value="UniProtKB"/>
</dbReference>
<dbReference type="GO" id="GO:0043023">
    <property type="term" value="F:ribosomal large subunit binding"/>
    <property type="evidence" value="ECO:0000266"/>
    <property type="project" value="MGI"/>
</dbReference>
<dbReference type="GO" id="GO:0043024">
    <property type="term" value="F:ribosomal small subunit binding"/>
    <property type="evidence" value="ECO:0000266"/>
    <property type="project" value="MGI"/>
</dbReference>
<dbReference type="GO" id="GO:0003723">
    <property type="term" value="F:RNA binding"/>
    <property type="evidence" value="ECO:0000314"/>
    <property type="project" value="MGI"/>
</dbReference>
<dbReference type="GO" id="GO:0019843">
    <property type="term" value="F:rRNA binding"/>
    <property type="evidence" value="ECO:0000314"/>
    <property type="project" value="MGI"/>
</dbReference>
<dbReference type="GO" id="GO:0030957">
    <property type="term" value="F:Tat protein binding"/>
    <property type="evidence" value="ECO:0007669"/>
    <property type="project" value="Ensembl"/>
</dbReference>
<dbReference type="GO" id="GO:0003713">
    <property type="term" value="F:transcription coactivator activity"/>
    <property type="evidence" value="ECO:0007669"/>
    <property type="project" value="Ensembl"/>
</dbReference>
<dbReference type="GO" id="GO:0051082">
    <property type="term" value="F:unfolded protein binding"/>
    <property type="evidence" value="ECO:0000250"/>
    <property type="project" value="UniProtKB"/>
</dbReference>
<dbReference type="GO" id="GO:0006884">
    <property type="term" value="P:cell volume homeostasis"/>
    <property type="evidence" value="ECO:0000314"/>
    <property type="project" value="MGI"/>
</dbReference>
<dbReference type="GO" id="GO:0090398">
    <property type="term" value="P:cellular senescence"/>
    <property type="evidence" value="ECO:0000250"/>
    <property type="project" value="UniProtKB"/>
</dbReference>
<dbReference type="GO" id="GO:0007098">
    <property type="term" value="P:centrosome cycle"/>
    <property type="evidence" value="ECO:0000250"/>
    <property type="project" value="UniProtKB"/>
</dbReference>
<dbReference type="GO" id="GO:0006281">
    <property type="term" value="P:DNA repair"/>
    <property type="evidence" value="ECO:0000250"/>
    <property type="project" value="UniProtKB"/>
</dbReference>
<dbReference type="GO" id="GO:0030225">
    <property type="term" value="P:macrophage differentiation"/>
    <property type="evidence" value="ECO:0007669"/>
    <property type="project" value="Ensembl"/>
</dbReference>
<dbReference type="GO" id="GO:0043066">
    <property type="term" value="P:negative regulation of apoptotic process"/>
    <property type="evidence" value="ECO:0000315"/>
    <property type="project" value="MGI"/>
</dbReference>
<dbReference type="GO" id="GO:0008285">
    <property type="term" value="P:negative regulation of cell population proliferation"/>
    <property type="evidence" value="ECO:0000250"/>
    <property type="project" value="UniProtKB"/>
</dbReference>
<dbReference type="GO" id="GO:0010826">
    <property type="term" value="P:negative regulation of centrosome duplication"/>
    <property type="evidence" value="ECO:0007669"/>
    <property type="project" value="Ensembl"/>
</dbReference>
<dbReference type="GO" id="GO:0010629">
    <property type="term" value="P:negative regulation of gene expression"/>
    <property type="evidence" value="ECO:0000316"/>
    <property type="project" value="MGI"/>
</dbReference>
<dbReference type="GO" id="GO:0048025">
    <property type="term" value="P:negative regulation of mRNA splicing, via spliceosome"/>
    <property type="evidence" value="ECO:0000314"/>
    <property type="project" value="MGI"/>
</dbReference>
<dbReference type="GO" id="GO:0044387">
    <property type="term" value="P:negative regulation of protein kinase activity by regulation of protein phosphorylation"/>
    <property type="evidence" value="ECO:0000250"/>
    <property type="project" value="UniProtKB"/>
</dbReference>
<dbReference type="GO" id="GO:0006913">
    <property type="term" value="P:nucleocytoplasmic transport"/>
    <property type="evidence" value="ECO:0000314"/>
    <property type="project" value="MGI"/>
</dbReference>
<dbReference type="GO" id="GO:0006334">
    <property type="term" value="P:nucleosome assembly"/>
    <property type="evidence" value="ECO:0007669"/>
    <property type="project" value="Ensembl"/>
</dbReference>
<dbReference type="GO" id="GO:0009891">
    <property type="term" value="P:positive regulation of biosynthetic process"/>
    <property type="evidence" value="ECO:0000314"/>
    <property type="project" value="MGI"/>
</dbReference>
<dbReference type="GO" id="GO:1902751">
    <property type="term" value="P:positive regulation of cell cycle G2/M phase transition"/>
    <property type="evidence" value="ECO:0000250"/>
    <property type="project" value="UniProtKB"/>
</dbReference>
<dbReference type="GO" id="GO:0008284">
    <property type="term" value="P:positive regulation of cell population proliferation"/>
    <property type="evidence" value="ECO:0000314"/>
    <property type="project" value="MGI"/>
</dbReference>
<dbReference type="GO" id="GO:0010825">
    <property type="term" value="P:positive regulation of centrosome duplication"/>
    <property type="evidence" value="ECO:0000316"/>
    <property type="project" value="MGI"/>
</dbReference>
<dbReference type="GO" id="GO:0045893">
    <property type="term" value="P:positive regulation of DNA-templated transcription"/>
    <property type="evidence" value="ECO:0000250"/>
    <property type="project" value="UniProtKB"/>
</dbReference>
<dbReference type="GO" id="GO:1904751">
    <property type="term" value="P:positive regulation of protein localization to nucleolus"/>
    <property type="evidence" value="ECO:0000314"/>
    <property type="project" value="UniProtKB"/>
</dbReference>
<dbReference type="GO" id="GO:0031398">
    <property type="term" value="P:positive regulation of protein ubiquitination"/>
    <property type="evidence" value="ECO:0000315"/>
    <property type="project" value="MGI"/>
</dbReference>
<dbReference type="GO" id="GO:0045944">
    <property type="term" value="P:positive regulation of transcription by RNA polymerase II"/>
    <property type="evidence" value="ECO:0000315"/>
    <property type="project" value="CAFA"/>
</dbReference>
<dbReference type="GO" id="GO:0045727">
    <property type="term" value="P:positive regulation of translation"/>
    <property type="evidence" value="ECO:0000250"/>
    <property type="project" value="UniProtKB"/>
</dbReference>
<dbReference type="GO" id="GO:0010608">
    <property type="term" value="P:post-transcriptional regulation of gene expression"/>
    <property type="evidence" value="ECO:0000315"/>
    <property type="project" value="MGI"/>
</dbReference>
<dbReference type="GO" id="GO:0006606">
    <property type="term" value="P:protein import into nucleus"/>
    <property type="evidence" value="ECO:0007669"/>
    <property type="project" value="Ensembl"/>
</dbReference>
<dbReference type="GO" id="GO:0008104">
    <property type="term" value="P:protein localization"/>
    <property type="evidence" value="ECO:0000315"/>
    <property type="project" value="MGI"/>
</dbReference>
<dbReference type="GO" id="GO:0050821">
    <property type="term" value="P:protein stabilization"/>
    <property type="evidence" value="ECO:0000315"/>
    <property type="project" value="CAFA"/>
</dbReference>
<dbReference type="GO" id="GO:0051726">
    <property type="term" value="P:regulation of cell cycle"/>
    <property type="evidence" value="ECO:0000315"/>
    <property type="project" value="MGI"/>
</dbReference>
<dbReference type="GO" id="GO:0001558">
    <property type="term" value="P:regulation of cell growth"/>
    <property type="evidence" value="ECO:0000314"/>
    <property type="project" value="MGI"/>
</dbReference>
<dbReference type="GO" id="GO:0046599">
    <property type="term" value="P:regulation of centriole replication"/>
    <property type="evidence" value="ECO:0000250"/>
    <property type="project" value="UniProtKB"/>
</dbReference>
<dbReference type="GO" id="GO:0010824">
    <property type="term" value="P:regulation of centrosome duplication"/>
    <property type="evidence" value="ECO:0000315"/>
    <property type="project" value="MGI"/>
</dbReference>
<dbReference type="GO" id="GO:0043516">
    <property type="term" value="P:regulation of DNA damage response, signal transduction by p53 class mediator"/>
    <property type="evidence" value="ECO:0000316"/>
    <property type="project" value="MGI"/>
</dbReference>
<dbReference type="GO" id="GO:0060735">
    <property type="term" value="P:regulation of eIF2 alpha phosphorylation by dsRNA"/>
    <property type="evidence" value="ECO:0000250"/>
    <property type="project" value="UniProtKB"/>
</dbReference>
<dbReference type="GO" id="GO:0032071">
    <property type="term" value="P:regulation of endodeoxyribonuclease activity"/>
    <property type="evidence" value="ECO:0000250"/>
    <property type="project" value="UniProtKB"/>
</dbReference>
<dbReference type="GO" id="GO:0060699">
    <property type="term" value="P:regulation of endoribonuclease activity"/>
    <property type="evidence" value="ECO:0000250"/>
    <property type="project" value="UniProtKB"/>
</dbReference>
<dbReference type="GO" id="GO:1902629">
    <property type="term" value="P:regulation of mRNA stability involved in cellular response to UV"/>
    <property type="evidence" value="ECO:0007669"/>
    <property type="project" value="Ensembl"/>
</dbReference>
<dbReference type="GO" id="GO:0031647">
    <property type="term" value="P:regulation of protein stability"/>
    <property type="evidence" value="ECO:0000315"/>
    <property type="project" value="MGI"/>
</dbReference>
<dbReference type="GO" id="GO:0042273">
    <property type="term" value="P:ribosomal large subunit biogenesis"/>
    <property type="evidence" value="ECO:0000314"/>
    <property type="project" value="MGI"/>
</dbReference>
<dbReference type="GO" id="GO:0000055">
    <property type="term" value="P:ribosomal large subunit export from nucleus"/>
    <property type="evidence" value="ECO:0000315"/>
    <property type="project" value="MGI"/>
</dbReference>
<dbReference type="GO" id="GO:0042274">
    <property type="term" value="P:ribosomal small subunit biogenesis"/>
    <property type="evidence" value="ECO:0000314"/>
    <property type="project" value="MGI"/>
</dbReference>
<dbReference type="GO" id="GO:0000056">
    <property type="term" value="P:ribosomal small subunit export from nucleus"/>
    <property type="evidence" value="ECO:0000314"/>
    <property type="project" value="MGI"/>
</dbReference>
<dbReference type="FunFam" id="1.10.10.2100:FF:000001">
    <property type="entry name" value="Nucleophosmin 1"/>
    <property type="match status" value="1"/>
</dbReference>
<dbReference type="FunFam" id="2.60.120.340:FF:000001">
    <property type="entry name" value="Nucleophosmin 1"/>
    <property type="match status" value="1"/>
</dbReference>
<dbReference type="Gene3D" id="1.10.10.2100">
    <property type="match status" value="1"/>
</dbReference>
<dbReference type="Gene3D" id="2.60.120.340">
    <property type="entry name" value="Nucleoplasmin core domain"/>
    <property type="match status" value="1"/>
</dbReference>
<dbReference type="InterPro" id="IPR032569">
    <property type="entry name" value="NPM1_C"/>
</dbReference>
<dbReference type="InterPro" id="IPR004301">
    <property type="entry name" value="Nucleoplasmin"/>
</dbReference>
<dbReference type="InterPro" id="IPR024057">
    <property type="entry name" value="Nucleoplasmin_core_dom"/>
</dbReference>
<dbReference type="InterPro" id="IPR036824">
    <property type="entry name" value="Nucleoplasmin_core_dom_sf"/>
</dbReference>
<dbReference type="PANTHER" id="PTHR22747:SF28">
    <property type="entry name" value="NUCLEOPHOSMIN"/>
    <property type="match status" value="1"/>
</dbReference>
<dbReference type="PANTHER" id="PTHR22747">
    <property type="entry name" value="NUCLEOPLASMIN"/>
    <property type="match status" value="1"/>
</dbReference>
<dbReference type="Pfam" id="PF16276">
    <property type="entry name" value="NPM1-C"/>
    <property type="match status" value="1"/>
</dbReference>
<dbReference type="Pfam" id="PF03066">
    <property type="entry name" value="Nucleoplasmin"/>
    <property type="match status" value="1"/>
</dbReference>
<dbReference type="SUPFAM" id="SSF69203">
    <property type="entry name" value="Nucleoplasmin-like core domain"/>
    <property type="match status" value="1"/>
</dbReference>
<gene>
    <name type="primary">Npm1</name>
</gene>
<accession>Q61937</accession>
<reference key="1">
    <citation type="journal article" date="1988" name="Chromosoma">
        <title>DNA cloning and amino acid sequence determination of a major constituent protein of mammalian nucleoli. Correspondence of the nucleoplasmin-related protein NO38 to mammalian protein B23.</title>
        <authorList>
            <person name="Schmidt-Zachmann M.S."/>
            <person name="Franke W.W."/>
        </authorList>
    </citation>
    <scope>NUCLEOTIDE SEQUENCE [MRNA]</scope>
</reference>
<reference key="2">
    <citation type="journal article" date="2005" name="Science">
        <title>The transcriptional landscape of the mammalian genome.</title>
        <authorList>
            <person name="Carninci P."/>
            <person name="Kasukawa T."/>
            <person name="Katayama S."/>
            <person name="Gough J."/>
            <person name="Frith M.C."/>
            <person name="Maeda N."/>
            <person name="Oyama R."/>
            <person name="Ravasi T."/>
            <person name="Lenhard B."/>
            <person name="Wells C."/>
            <person name="Kodzius R."/>
            <person name="Shimokawa K."/>
            <person name="Bajic V.B."/>
            <person name="Brenner S.E."/>
            <person name="Batalov S."/>
            <person name="Forrest A.R."/>
            <person name="Zavolan M."/>
            <person name="Davis M.J."/>
            <person name="Wilming L.G."/>
            <person name="Aidinis V."/>
            <person name="Allen J.E."/>
            <person name="Ambesi-Impiombato A."/>
            <person name="Apweiler R."/>
            <person name="Aturaliya R.N."/>
            <person name="Bailey T.L."/>
            <person name="Bansal M."/>
            <person name="Baxter L."/>
            <person name="Beisel K.W."/>
            <person name="Bersano T."/>
            <person name="Bono H."/>
            <person name="Chalk A.M."/>
            <person name="Chiu K.P."/>
            <person name="Choudhary V."/>
            <person name="Christoffels A."/>
            <person name="Clutterbuck D.R."/>
            <person name="Crowe M.L."/>
            <person name="Dalla E."/>
            <person name="Dalrymple B.P."/>
            <person name="de Bono B."/>
            <person name="Della Gatta G."/>
            <person name="di Bernardo D."/>
            <person name="Down T."/>
            <person name="Engstrom P."/>
            <person name="Fagiolini M."/>
            <person name="Faulkner G."/>
            <person name="Fletcher C.F."/>
            <person name="Fukushima T."/>
            <person name="Furuno M."/>
            <person name="Futaki S."/>
            <person name="Gariboldi M."/>
            <person name="Georgii-Hemming P."/>
            <person name="Gingeras T.R."/>
            <person name="Gojobori T."/>
            <person name="Green R.E."/>
            <person name="Gustincich S."/>
            <person name="Harbers M."/>
            <person name="Hayashi Y."/>
            <person name="Hensch T.K."/>
            <person name="Hirokawa N."/>
            <person name="Hill D."/>
            <person name="Huminiecki L."/>
            <person name="Iacono M."/>
            <person name="Ikeo K."/>
            <person name="Iwama A."/>
            <person name="Ishikawa T."/>
            <person name="Jakt M."/>
            <person name="Kanapin A."/>
            <person name="Katoh M."/>
            <person name="Kawasawa Y."/>
            <person name="Kelso J."/>
            <person name="Kitamura H."/>
            <person name="Kitano H."/>
            <person name="Kollias G."/>
            <person name="Krishnan S.P."/>
            <person name="Kruger A."/>
            <person name="Kummerfeld S.K."/>
            <person name="Kurochkin I.V."/>
            <person name="Lareau L.F."/>
            <person name="Lazarevic D."/>
            <person name="Lipovich L."/>
            <person name="Liu J."/>
            <person name="Liuni S."/>
            <person name="McWilliam S."/>
            <person name="Madan Babu M."/>
            <person name="Madera M."/>
            <person name="Marchionni L."/>
            <person name="Matsuda H."/>
            <person name="Matsuzawa S."/>
            <person name="Miki H."/>
            <person name="Mignone F."/>
            <person name="Miyake S."/>
            <person name="Morris K."/>
            <person name="Mottagui-Tabar S."/>
            <person name="Mulder N."/>
            <person name="Nakano N."/>
            <person name="Nakauchi H."/>
            <person name="Ng P."/>
            <person name="Nilsson R."/>
            <person name="Nishiguchi S."/>
            <person name="Nishikawa S."/>
            <person name="Nori F."/>
            <person name="Ohara O."/>
            <person name="Okazaki Y."/>
            <person name="Orlando V."/>
            <person name="Pang K.C."/>
            <person name="Pavan W.J."/>
            <person name="Pavesi G."/>
            <person name="Pesole G."/>
            <person name="Petrovsky N."/>
            <person name="Piazza S."/>
            <person name="Reed J."/>
            <person name="Reid J.F."/>
            <person name="Ring B.Z."/>
            <person name="Ringwald M."/>
            <person name="Rost B."/>
            <person name="Ruan Y."/>
            <person name="Salzberg S.L."/>
            <person name="Sandelin A."/>
            <person name="Schneider C."/>
            <person name="Schoenbach C."/>
            <person name="Sekiguchi K."/>
            <person name="Semple C.A."/>
            <person name="Seno S."/>
            <person name="Sessa L."/>
            <person name="Sheng Y."/>
            <person name="Shibata Y."/>
            <person name="Shimada H."/>
            <person name="Shimada K."/>
            <person name="Silva D."/>
            <person name="Sinclair B."/>
            <person name="Sperling S."/>
            <person name="Stupka E."/>
            <person name="Sugiura K."/>
            <person name="Sultana R."/>
            <person name="Takenaka Y."/>
            <person name="Taki K."/>
            <person name="Tammoja K."/>
            <person name="Tan S.L."/>
            <person name="Tang S."/>
            <person name="Taylor M.S."/>
            <person name="Tegner J."/>
            <person name="Teichmann S.A."/>
            <person name="Ueda H.R."/>
            <person name="van Nimwegen E."/>
            <person name="Verardo R."/>
            <person name="Wei C.L."/>
            <person name="Yagi K."/>
            <person name="Yamanishi H."/>
            <person name="Zabarovsky E."/>
            <person name="Zhu S."/>
            <person name="Zimmer A."/>
            <person name="Hide W."/>
            <person name="Bult C."/>
            <person name="Grimmond S.M."/>
            <person name="Teasdale R.D."/>
            <person name="Liu E.T."/>
            <person name="Brusic V."/>
            <person name="Quackenbush J."/>
            <person name="Wahlestedt C."/>
            <person name="Mattick J.S."/>
            <person name="Hume D.A."/>
            <person name="Kai C."/>
            <person name="Sasaki D."/>
            <person name="Tomaru Y."/>
            <person name="Fukuda S."/>
            <person name="Kanamori-Katayama M."/>
            <person name="Suzuki M."/>
            <person name="Aoki J."/>
            <person name="Arakawa T."/>
            <person name="Iida J."/>
            <person name="Imamura K."/>
            <person name="Itoh M."/>
            <person name="Kato T."/>
            <person name="Kawaji H."/>
            <person name="Kawagashira N."/>
            <person name="Kawashima T."/>
            <person name="Kojima M."/>
            <person name="Kondo S."/>
            <person name="Konno H."/>
            <person name="Nakano K."/>
            <person name="Ninomiya N."/>
            <person name="Nishio T."/>
            <person name="Okada M."/>
            <person name="Plessy C."/>
            <person name="Shibata K."/>
            <person name="Shiraki T."/>
            <person name="Suzuki S."/>
            <person name="Tagami M."/>
            <person name="Waki K."/>
            <person name="Watahiki A."/>
            <person name="Okamura-Oho Y."/>
            <person name="Suzuki H."/>
            <person name="Kawai J."/>
            <person name="Hayashizaki Y."/>
        </authorList>
    </citation>
    <scope>NUCLEOTIDE SEQUENCE [LARGE SCALE MRNA]</scope>
    <source>
        <strain>C57BL/6J</strain>
        <tissue>Embryo</tissue>
    </source>
</reference>
<reference key="3">
    <citation type="journal article" date="2004" name="Genome Res.">
        <title>The status, quality, and expansion of the NIH full-length cDNA project: the Mammalian Gene Collection (MGC).</title>
        <authorList>
            <consortium name="The MGC Project Team"/>
        </authorList>
    </citation>
    <scope>NUCLEOTIDE SEQUENCE [LARGE SCALE MRNA]</scope>
    <source>
        <strain>C57BL/6J</strain>
        <tissue>Brain</tissue>
    </source>
</reference>
<reference key="4">
    <citation type="submission" date="2007-07" db="UniProtKB">
        <authorList>
            <person name="Lubec G."/>
            <person name="Yang J.W."/>
            <person name="Zigmond M."/>
        </authorList>
    </citation>
    <scope>PROTEIN SEQUENCE OF 33-45</scope>
    <source>
        <tissue>Brain</tissue>
    </source>
</reference>
<reference key="5">
    <citation type="journal article" date="1998" name="J. Biol. Chem.">
        <title>A B-cell-specific DNA recombination complex.</title>
        <authorList>
            <person name="Borggrefe T."/>
            <person name="Wabl M."/>
            <person name="Akhmedov A.T."/>
            <person name="Jessberger R."/>
        </authorList>
    </citation>
    <scope>PROTEIN SEQUENCE OF 46-52 AND 266-271</scope>
    <scope>SUBUNIT</scope>
    <scope>TISSUE SPECIFICITY</scope>
    <source>
        <strain>C57BL/6J</strain>
        <tissue>Spleen</tissue>
    </source>
</reference>
<reference key="6">
    <citation type="journal article" date="2003" name="J. Biol. Chem.">
        <title>Nucleophosmin interacts with and inhibits the catalytic function of eukaryotic initiation factor 2 kinase PKR.</title>
        <authorList>
            <person name="Pang Q."/>
            <person name="Christianson T.A."/>
            <person name="Koretsky T."/>
            <person name="Carlson H."/>
            <person name="David L."/>
            <person name="Keeble W."/>
            <person name="Faulkner G.R."/>
            <person name="Speckhart A."/>
            <person name="Bagby G.C."/>
        </authorList>
    </citation>
    <scope>INTERACTION WITH EIF2AK2</scope>
</reference>
<reference key="7">
    <citation type="journal article" date="2006" name="Mol. Cell. Proteomics">
        <title>Comprehensive identification of phosphorylation sites in postsynaptic density preparations.</title>
        <authorList>
            <person name="Trinidad J.C."/>
            <person name="Specht C.G."/>
            <person name="Thalhammer A."/>
            <person name="Schoepfer R."/>
            <person name="Burlingame A.L."/>
        </authorList>
    </citation>
    <scope>PHOSPHORYLATION [LARGE SCALE ANALYSIS] AT SER-125</scope>
    <scope>IDENTIFICATION BY MASS SPECTROMETRY [LARGE SCALE ANALYSIS]</scope>
    <source>
        <tissue>Brain</tissue>
    </source>
</reference>
<reference key="8">
    <citation type="journal article" date="2007" name="Proc. Natl. Acad. Sci. U.S.A.">
        <title>Large-scale phosphorylation analysis of mouse liver.</title>
        <authorList>
            <person name="Villen J."/>
            <person name="Beausoleil S.A."/>
            <person name="Gerber S.A."/>
            <person name="Gygi S.P."/>
        </authorList>
    </citation>
    <scope>PHOSPHORYLATION [LARGE SCALE ANALYSIS] AT SER-125</scope>
    <scope>IDENTIFICATION BY MASS SPECTROMETRY [LARGE SCALE ANALYSIS]</scope>
    <source>
        <tissue>Liver</tissue>
    </source>
</reference>
<reference key="9">
    <citation type="journal article" date="2008" name="J. Proteome Res.">
        <title>Specific phosphopeptide enrichment with immobilized titanium ion affinity chromatography adsorbent for phosphoproteome analysis.</title>
        <authorList>
            <person name="Zhou H."/>
            <person name="Ye M."/>
            <person name="Dong J."/>
            <person name="Han G."/>
            <person name="Jiang X."/>
            <person name="Wu R."/>
            <person name="Zou H."/>
        </authorList>
    </citation>
    <scope>PHOSPHORYLATION [LARGE SCALE ANALYSIS] AT SER-125</scope>
    <scope>IDENTIFICATION BY MASS SPECTROMETRY [LARGE SCALE ANALYSIS]</scope>
    <source>
        <tissue>Liver</tissue>
    </source>
</reference>
<reference key="10">
    <citation type="journal article" date="2009" name="Immunity">
        <title>The phagosomal proteome in interferon-gamma-activated macrophages.</title>
        <authorList>
            <person name="Trost M."/>
            <person name="English L."/>
            <person name="Lemieux S."/>
            <person name="Courcelles M."/>
            <person name="Desjardins M."/>
            <person name="Thibault P."/>
        </authorList>
    </citation>
    <scope>PHOSPHORYLATION [LARGE SCALE ANALYSIS] AT SER-70 AND SER-125</scope>
    <scope>IDENTIFICATION BY MASS SPECTROMETRY [LARGE SCALE ANALYSIS]</scope>
</reference>
<reference key="11">
    <citation type="journal article" date="2009" name="Mol. Cell. Proteomics">
        <title>Large scale localization of protein phosphorylation by use of electron capture dissociation mass spectrometry.</title>
        <authorList>
            <person name="Sweet S.M."/>
            <person name="Bailey C.M."/>
            <person name="Cunningham D.L."/>
            <person name="Heath J.K."/>
            <person name="Cooper H.J."/>
        </authorList>
    </citation>
    <scope>PHOSPHORYLATION [LARGE SCALE ANALYSIS] AT SER-125</scope>
    <scope>IDENTIFICATION BY MASS SPECTROMETRY [LARGE SCALE ANALYSIS]</scope>
    <source>
        <tissue>Embryonic fibroblast</tissue>
    </source>
</reference>
<reference key="12">
    <citation type="journal article" date="2010" name="Cell">
        <title>A tissue-specific atlas of mouse protein phosphorylation and expression.</title>
        <authorList>
            <person name="Huttlin E.L."/>
            <person name="Jedrychowski M.P."/>
            <person name="Elias J.E."/>
            <person name="Goswami T."/>
            <person name="Rad R."/>
            <person name="Beausoleil S.A."/>
            <person name="Villen J."/>
            <person name="Haas W."/>
            <person name="Sowa M.E."/>
            <person name="Gygi S.P."/>
        </authorList>
    </citation>
    <scope>PHOSPHORYLATION [LARGE SCALE ANALYSIS] AT TYR-67; SER-70; THR-75 AND SER-125</scope>
    <scope>IDENTIFICATION BY MASS SPECTROMETRY [LARGE SCALE ANALYSIS]</scope>
    <source>
        <tissue>Brain</tissue>
        <tissue>Kidney</tissue>
        <tissue>Liver</tissue>
        <tissue>Lung</tissue>
        <tissue>Pancreas</tissue>
        <tissue>Spleen</tissue>
        <tissue>Testis</tissue>
    </source>
</reference>
<reference key="13">
    <citation type="journal article" date="2010" name="Mol. Cell">
        <title>The ARF tumor suppressor controls ribosome biogenesis by regulating the RNA polymerase I transcription factor TTF-I.</title>
        <authorList>
            <person name="Lessard F."/>
            <person name="Morin F."/>
            <person name="Ivanchuk S."/>
            <person name="Langlois F."/>
            <person name="Stefanovsky V."/>
            <person name="Rutka J."/>
            <person name="Moss T."/>
        </authorList>
    </citation>
    <scope>FUNCTION</scope>
    <scope>INTERACTION WITH TTF1</scope>
</reference>
<reference key="14">
    <citation type="journal article" date="2013" name="Mol. Cell">
        <title>SIRT5-mediated lysine desuccinylation impacts diverse metabolic pathways.</title>
        <authorList>
            <person name="Park J."/>
            <person name="Chen Y."/>
            <person name="Tishkoff D.X."/>
            <person name="Peng C."/>
            <person name="Tan M."/>
            <person name="Dai L."/>
            <person name="Xie Z."/>
            <person name="Zhang Y."/>
            <person name="Zwaans B.M."/>
            <person name="Skinner M.E."/>
            <person name="Lombard D.B."/>
            <person name="Zhao Y."/>
        </authorList>
    </citation>
    <scope>ACETYLATION [LARGE SCALE ANALYSIS] AT LYS-255; LYS-265 AND LYS-271</scope>
    <scope>SUCCINYLATION [LARGE SCALE ANALYSIS] AT LYS-265</scope>
    <scope>IDENTIFICATION BY MASS SPECTROMETRY [LARGE SCALE ANALYSIS]</scope>
    <source>
        <tissue>Embryonic fibroblast</tissue>
    </source>
</reference>
<reference key="15">
    <citation type="journal article" date="2014" name="Stem Cells Dev.">
        <title>Lrrc34, a novel nucleolar protein, interacts with npm1 and ncl and has an impact on pluripotent stem cells.</title>
        <authorList>
            <person name="Luehrig S."/>
            <person name="Siamishi I."/>
            <person name="Tesmer-Wolf M."/>
            <person name="Zechner U."/>
            <person name="Engel W."/>
            <person name="Nolte J."/>
        </authorList>
    </citation>
    <scope>INTERACTION WITH LRRC34</scope>
</reference>
<proteinExistence type="evidence at protein level"/>